<reference key="1">
    <citation type="journal article" date="1977" name="Biochim. Biophys. Acta">
        <title>The myoglobin of the Cape fox (Vulpes chama).</title>
        <authorList>
            <person name="Jones L.T."/>
            <person name="Castillo O."/>
            <person name="Lehmann H."/>
        </authorList>
    </citation>
    <scope>PARTIAL PROTEIN SEQUENCE</scope>
</reference>
<sequence length="154" mass="17337">MGLSDGEWQLVLNIWGKVETDLAGHGQEVLIRLFKNHPETLDKFDKFKHLKTEDEMKGSEDLKKHGNTVLTALGGILKKKGHHEAELKPLAQSHATKHKIPVKYLEFISDAIIQVLQSKHSGDFHADTEAAMKKALELFRNDIAAKYKELGFQG</sequence>
<evidence type="ECO:0000250" key="1">
    <source>
        <dbReference type="UniProtKB" id="P02144"/>
    </source>
</evidence>
<evidence type="ECO:0000250" key="2">
    <source>
        <dbReference type="UniProtKB" id="P02185"/>
    </source>
</evidence>
<evidence type="ECO:0000250" key="3">
    <source>
        <dbReference type="UniProtKB" id="P02189"/>
    </source>
</evidence>
<evidence type="ECO:0000250" key="4">
    <source>
        <dbReference type="UniProtKB" id="P04247"/>
    </source>
</evidence>
<evidence type="ECO:0000250" key="5">
    <source>
        <dbReference type="UniProtKB" id="P68082"/>
    </source>
</evidence>
<evidence type="ECO:0000250" key="6">
    <source>
        <dbReference type="UniProtKB" id="Q9QZ76"/>
    </source>
</evidence>
<evidence type="ECO:0000255" key="7">
    <source>
        <dbReference type="PROSITE-ProRule" id="PRU00238"/>
    </source>
</evidence>
<protein>
    <recommendedName>
        <fullName>Myoglobin</fullName>
    </recommendedName>
    <alternativeName>
        <fullName evidence="1">Nitrite reductase MB</fullName>
        <ecNumber evidence="1">1.7.-.-</ecNumber>
    </alternativeName>
    <alternativeName>
        <fullName evidence="1">Pseudoperoxidase MB</fullName>
        <ecNumber evidence="1">1.11.1.-</ecNumber>
    </alternativeName>
</protein>
<dbReference type="EC" id="1.7.-.-" evidence="1"/>
<dbReference type="EC" id="1.11.1.-" evidence="1"/>
<dbReference type="PIR" id="A90625">
    <property type="entry name" value="MYFXC"/>
</dbReference>
<dbReference type="SMR" id="P02160"/>
<dbReference type="GO" id="GO:0070062">
    <property type="term" value="C:extracellular exosome"/>
    <property type="evidence" value="ECO:0007669"/>
    <property type="project" value="TreeGrafter"/>
</dbReference>
<dbReference type="GO" id="GO:0016528">
    <property type="term" value="C:sarcoplasm"/>
    <property type="evidence" value="ECO:0000250"/>
    <property type="project" value="UniProtKB"/>
</dbReference>
<dbReference type="GO" id="GO:0020037">
    <property type="term" value="F:heme binding"/>
    <property type="evidence" value="ECO:0007669"/>
    <property type="project" value="InterPro"/>
</dbReference>
<dbReference type="GO" id="GO:0046872">
    <property type="term" value="F:metal ion binding"/>
    <property type="evidence" value="ECO:0007669"/>
    <property type="project" value="UniProtKB-KW"/>
</dbReference>
<dbReference type="GO" id="GO:0098809">
    <property type="term" value="F:nitrite reductase activity"/>
    <property type="evidence" value="ECO:0000250"/>
    <property type="project" value="UniProtKB"/>
</dbReference>
<dbReference type="GO" id="GO:0019825">
    <property type="term" value="F:oxygen binding"/>
    <property type="evidence" value="ECO:0007669"/>
    <property type="project" value="InterPro"/>
</dbReference>
<dbReference type="GO" id="GO:0005344">
    <property type="term" value="F:oxygen carrier activity"/>
    <property type="evidence" value="ECO:0000250"/>
    <property type="project" value="UniProtKB"/>
</dbReference>
<dbReference type="GO" id="GO:0004601">
    <property type="term" value="F:peroxidase activity"/>
    <property type="evidence" value="ECO:0000250"/>
    <property type="project" value="UniProtKB"/>
</dbReference>
<dbReference type="GO" id="GO:0019430">
    <property type="term" value="P:removal of superoxide radicals"/>
    <property type="evidence" value="ECO:0000250"/>
    <property type="project" value="UniProtKB"/>
</dbReference>
<dbReference type="Gene3D" id="6.10.140.2100">
    <property type="match status" value="1"/>
</dbReference>
<dbReference type="Gene3D" id="6.10.140.2110">
    <property type="match status" value="1"/>
</dbReference>
<dbReference type="InterPro" id="IPR000971">
    <property type="entry name" value="Globin"/>
</dbReference>
<dbReference type="InterPro" id="IPR009050">
    <property type="entry name" value="Globin-like_sf"/>
</dbReference>
<dbReference type="InterPro" id="IPR002335">
    <property type="entry name" value="Myoglobin"/>
</dbReference>
<dbReference type="PANTHER" id="PTHR47132">
    <property type="entry name" value="MYOGLOBIN"/>
    <property type="match status" value="1"/>
</dbReference>
<dbReference type="PANTHER" id="PTHR47132:SF1">
    <property type="entry name" value="MYOGLOBIN"/>
    <property type="match status" value="1"/>
</dbReference>
<dbReference type="Pfam" id="PF00042">
    <property type="entry name" value="Globin"/>
    <property type="match status" value="1"/>
</dbReference>
<dbReference type="PRINTS" id="PR00613">
    <property type="entry name" value="MYOGLOBIN"/>
</dbReference>
<dbReference type="SUPFAM" id="SSF46458">
    <property type="entry name" value="Globin-like"/>
    <property type="match status" value="1"/>
</dbReference>
<dbReference type="PROSITE" id="PS01033">
    <property type="entry name" value="GLOBIN"/>
    <property type="match status" value="1"/>
</dbReference>
<organism>
    <name type="scientific">Vulpes chama</name>
    <name type="common">Cape fox</name>
    <dbReference type="NCBI Taxonomy" id="9626"/>
    <lineage>
        <taxon>Eukaryota</taxon>
        <taxon>Metazoa</taxon>
        <taxon>Chordata</taxon>
        <taxon>Craniata</taxon>
        <taxon>Vertebrata</taxon>
        <taxon>Euteleostomi</taxon>
        <taxon>Mammalia</taxon>
        <taxon>Eutheria</taxon>
        <taxon>Laurasiatheria</taxon>
        <taxon>Carnivora</taxon>
        <taxon>Caniformia</taxon>
        <taxon>Canidae</taxon>
        <taxon>Vulpes</taxon>
    </lineage>
</organism>
<gene>
    <name type="primary">MB</name>
</gene>
<comment type="function">
    <text evidence="1">Monomeric heme protein which primary function is to store oxygen and facilitate its diffusion within muscle tissues. Reversibly binds oxygen through a pentacoordinated heme iron and enables its timely and efficient release as needed during periods of heightened demand. Depending on the oxidative conditions of tissues and cells, and in addition to its ability to bind oxygen, it also has a nitrite reductase activity whereby it regulates the production of bioactive nitric oxide. Under stress conditions, like hypoxia and anoxia, it also protects cells against reactive oxygen species thanks to its pseudoperoxidase activity.</text>
</comment>
<comment type="catalytic activity">
    <reaction evidence="1">
        <text>Fe(III)-heme b-[protein] + nitric oxide + H2O = Fe(II)-heme b-[protein] + nitrite + 2 H(+)</text>
        <dbReference type="Rhea" id="RHEA:77711"/>
        <dbReference type="Rhea" id="RHEA-COMP:18975"/>
        <dbReference type="Rhea" id="RHEA-COMP:18976"/>
        <dbReference type="ChEBI" id="CHEBI:15377"/>
        <dbReference type="ChEBI" id="CHEBI:15378"/>
        <dbReference type="ChEBI" id="CHEBI:16301"/>
        <dbReference type="ChEBI" id="CHEBI:16480"/>
        <dbReference type="ChEBI" id="CHEBI:55376"/>
        <dbReference type="ChEBI" id="CHEBI:60344"/>
    </reaction>
    <physiologicalReaction direction="right-to-left" evidence="1">
        <dbReference type="Rhea" id="RHEA:77713"/>
    </physiologicalReaction>
</comment>
<comment type="catalytic activity">
    <reaction evidence="1">
        <text>H2O2 + AH2 = A + 2 H2O</text>
        <dbReference type="Rhea" id="RHEA:30275"/>
        <dbReference type="ChEBI" id="CHEBI:13193"/>
        <dbReference type="ChEBI" id="CHEBI:15377"/>
        <dbReference type="ChEBI" id="CHEBI:16240"/>
        <dbReference type="ChEBI" id="CHEBI:17499"/>
    </reaction>
</comment>
<comment type="subunit">
    <text evidence="2">Monomeric.</text>
</comment>
<comment type="subcellular location">
    <subcellularLocation>
        <location evidence="1">Cytoplasm</location>
        <location evidence="1">Sarcoplasm</location>
    </subcellularLocation>
</comment>
<comment type="similarity">
    <text evidence="7">Belongs to the globin family.</text>
</comment>
<keyword id="KW-0963">Cytoplasm</keyword>
<keyword id="KW-0903">Direct protein sequencing</keyword>
<keyword id="KW-0349">Heme</keyword>
<keyword id="KW-0408">Iron</keyword>
<keyword id="KW-0479">Metal-binding</keyword>
<keyword id="KW-0514">Muscle protein</keyword>
<keyword id="KW-0560">Oxidoreductase</keyword>
<keyword id="KW-0561">Oxygen transport</keyword>
<keyword id="KW-0597">Phosphoprotein</keyword>
<keyword id="KW-0813">Transport</keyword>
<name>MYG_VULCH</name>
<feature type="chain" id="PRO_0000053349" description="Myoglobin">
    <location>
        <begin position="1"/>
        <end position="154"/>
    </location>
</feature>
<feature type="domain" description="Globin" evidence="7">
    <location>
        <begin position="2"/>
        <end position="148"/>
    </location>
</feature>
<feature type="binding site" evidence="5">
    <location>
        <position position="65"/>
    </location>
    <ligand>
        <name>nitrite</name>
        <dbReference type="ChEBI" id="CHEBI:16301"/>
    </ligand>
</feature>
<feature type="binding site" evidence="3 7">
    <location>
        <position position="65"/>
    </location>
    <ligand>
        <name>O2</name>
        <dbReference type="ChEBI" id="CHEBI:15379"/>
    </ligand>
</feature>
<feature type="binding site" description="proximal binding residue" evidence="1">
    <location>
        <position position="94"/>
    </location>
    <ligand>
        <name>heme b</name>
        <dbReference type="ChEBI" id="CHEBI:60344"/>
    </ligand>
    <ligandPart>
        <name>Fe</name>
        <dbReference type="ChEBI" id="CHEBI:18248"/>
    </ligandPart>
</feature>
<feature type="modified residue" description="Phosphoserine" evidence="6">
    <location>
        <position position="4"/>
    </location>
</feature>
<feature type="modified residue" description="Phosphothreonine" evidence="4">
    <location>
        <position position="68"/>
    </location>
</feature>
<accession>P02160</accession>
<proteinExistence type="evidence at protein level"/>